<protein>
    <recommendedName>
        <fullName evidence="1">Glycogen synthase</fullName>
        <ecNumber evidence="1">2.4.1.21</ecNumber>
    </recommendedName>
    <alternativeName>
        <fullName evidence="1">Starch [bacterial glycogen] synthase</fullName>
    </alternativeName>
</protein>
<gene>
    <name evidence="1" type="primary">glgA</name>
    <name type="ordered locus">BLi03227</name>
    <name type="ordered locus">BL01416</name>
</gene>
<organism>
    <name type="scientific">Bacillus licheniformis (strain ATCC 14580 / DSM 13 / JCM 2505 / CCUG 7422 / NBRC 12200 / NCIMB 9375 / NCTC 10341 / NRRL NRS-1264 / Gibson 46)</name>
    <dbReference type="NCBI Taxonomy" id="279010"/>
    <lineage>
        <taxon>Bacteria</taxon>
        <taxon>Bacillati</taxon>
        <taxon>Bacillota</taxon>
        <taxon>Bacilli</taxon>
        <taxon>Bacillales</taxon>
        <taxon>Bacillaceae</taxon>
        <taxon>Bacillus</taxon>
    </lineage>
</organism>
<keyword id="KW-0320">Glycogen biosynthesis</keyword>
<keyword id="KW-0328">Glycosyltransferase</keyword>
<keyword id="KW-1185">Reference proteome</keyword>
<keyword id="KW-0808">Transferase</keyword>
<comment type="function">
    <text evidence="1">Synthesizes alpha-1,4-glucan chains using ADP-glucose.</text>
</comment>
<comment type="catalytic activity">
    <reaction evidence="1">
        <text>[(1-&gt;4)-alpha-D-glucosyl](n) + ADP-alpha-D-glucose = [(1-&gt;4)-alpha-D-glucosyl](n+1) + ADP + H(+)</text>
        <dbReference type="Rhea" id="RHEA:18189"/>
        <dbReference type="Rhea" id="RHEA-COMP:9584"/>
        <dbReference type="Rhea" id="RHEA-COMP:9587"/>
        <dbReference type="ChEBI" id="CHEBI:15378"/>
        <dbReference type="ChEBI" id="CHEBI:15444"/>
        <dbReference type="ChEBI" id="CHEBI:57498"/>
        <dbReference type="ChEBI" id="CHEBI:456216"/>
        <dbReference type="EC" id="2.4.1.21"/>
    </reaction>
</comment>
<comment type="pathway">
    <text evidence="1">Glycan biosynthesis; glycogen biosynthesis.</text>
</comment>
<comment type="similarity">
    <text evidence="1">Belongs to the glycosyltransferase 1 family. Bacterial/plant glycogen synthase subfamily.</text>
</comment>
<dbReference type="EC" id="2.4.1.21" evidence="1"/>
<dbReference type="EMBL" id="CP000002">
    <property type="protein sequence ID" value="AAU24726.1"/>
    <property type="molecule type" value="Genomic_DNA"/>
</dbReference>
<dbReference type="EMBL" id="AE017333">
    <property type="protein sequence ID" value="AAU42087.1"/>
    <property type="molecule type" value="Genomic_DNA"/>
</dbReference>
<dbReference type="RefSeq" id="WP_009329435.1">
    <property type="nucleotide sequence ID" value="NC_006322.1"/>
</dbReference>
<dbReference type="SMR" id="Q65FS7"/>
<dbReference type="STRING" id="279010.BL01416"/>
<dbReference type="CAZy" id="GT5">
    <property type="family name" value="Glycosyltransferase Family 5"/>
</dbReference>
<dbReference type="GeneID" id="92860181"/>
<dbReference type="KEGG" id="bld:BLi03227"/>
<dbReference type="KEGG" id="bli:BL01416"/>
<dbReference type="PATRIC" id="fig|279010.13.peg.3300"/>
<dbReference type="eggNOG" id="COG0297">
    <property type="taxonomic scope" value="Bacteria"/>
</dbReference>
<dbReference type="HOGENOM" id="CLU_009583_18_2_9"/>
<dbReference type="UniPathway" id="UPA00164"/>
<dbReference type="Proteomes" id="UP000000606">
    <property type="component" value="Chromosome"/>
</dbReference>
<dbReference type="Bgee" id="BL01416">
    <property type="expression patterns" value="Expressed in primary dorsal nerve cord and 7 other cell types or tissues"/>
</dbReference>
<dbReference type="GO" id="GO:0009011">
    <property type="term" value="F:alpha-1,4-glucan glucosyltransferase (ADP-glucose donor) activity"/>
    <property type="evidence" value="ECO:0007669"/>
    <property type="project" value="UniProtKB-UniRule"/>
</dbReference>
<dbReference type="GO" id="GO:0004373">
    <property type="term" value="F:alpha-1,4-glucan glucosyltransferase (UDP-glucose donor) activity"/>
    <property type="evidence" value="ECO:0007669"/>
    <property type="project" value="InterPro"/>
</dbReference>
<dbReference type="GO" id="GO:0005978">
    <property type="term" value="P:glycogen biosynthetic process"/>
    <property type="evidence" value="ECO:0007669"/>
    <property type="project" value="UniProtKB-UniRule"/>
</dbReference>
<dbReference type="CDD" id="cd03791">
    <property type="entry name" value="GT5_Glycogen_synthase_DULL1-like"/>
    <property type="match status" value="1"/>
</dbReference>
<dbReference type="Gene3D" id="3.40.50.2000">
    <property type="entry name" value="Glycogen Phosphorylase B"/>
    <property type="match status" value="2"/>
</dbReference>
<dbReference type="HAMAP" id="MF_00484">
    <property type="entry name" value="Glycogen_synth"/>
    <property type="match status" value="1"/>
</dbReference>
<dbReference type="InterPro" id="IPR001296">
    <property type="entry name" value="Glyco_trans_1"/>
</dbReference>
<dbReference type="InterPro" id="IPR011835">
    <property type="entry name" value="GS/SS"/>
</dbReference>
<dbReference type="InterPro" id="IPR013534">
    <property type="entry name" value="Starch_synth_cat_dom"/>
</dbReference>
<dbReference type="NCBIfam" id="TIGR02095">
    <property type="entry name" value="glgA"/>
    <property type="match status" value="1"/>
</dbReference>
<dbReference type="NCBIfam" id="NF001898">
    <property type="entry name" value="PRK00654.1-1"/>
    <property type="match status" value="1"/>
</dbReference>
<dbReference type="NCBIfam" id="NF001899">
    <property type="entry name" value="PRK00654.1-2"/>
    <property type="match status" value="1"/>
</dbReference>
<dbReference type="PANTHER" id="PTHR45825:SF11">
    <property type="entry name" value="ALPHA AMYLASE DOMAIN-CONTAINING PROTEIN"/>
    <property type="match status" value="1"/>
</dbReference>
<dbReference type="PANTHER" id="PTHR45825">
    <property type="entry name" value="GRANULE-BOUND STARCH SYNTHASE 1, CHLOROPLASTIC/AMYLOPLASTIC"/>
    <property type="match status" value="1"/>
</dbReference>
<dbReference type="Pfam" id="PF08323">
    <property type="entry name" value="Glyco_transf_5"/>
    <property type="match status" value="1"/>
</dbReference>
<dbReference type="Pfam" id="PF00534">
    <property type="entry name" value="Glycos_transf_1"/>
    <property type="match status" value="1"/>
</dbReference>
<dbReference type="SUPFAM" id="SSF53756">
    <property type="entry name" value="UDP-Glycosyltransferase/glycogen phosphorylase"/>
    <property type="match status" value="1"/>
</dbReference>
<accession>Q65FS7</accession>
<accession>Q62R84</accession>
<feature type="chain" id="PRO_0000230235" description="Glycogen synthase">
    <location>
        <begin position="1"/>
        <end position="484"/>
    </location>
</feature>
<feature type="binding site" evidence="1">
    <location>
        <position position="15"/>
    </location>
    <ligand>
        <name>ADP-alpha-D-glucose</name>
        <dbReference type="ChEBI" id="CHEBI:57498"/>
    </ligand>
</feature>
<reference key="1">
    <citation type="journal article" date="2004" name="J. Mol. Microbiol. Biotechnol.">
        <title>The complete genome sequence of Bacillus licheniformis DSM13, an organism with great industrial potential.</title>
        <authorList>
            <person name="Veith B."/>
            <person name="Herzberg C."/>
            <person name="Steckel S."/>
            <person name="Feesche J."/>
            <person name="Maurer K.H."/>
            <person name="Ehrenreich P."/>
            <person name="Baeumer S."/>
            <person name="Henne A."/>
            <person name="Liesegang H."/>
            <person name="Merkl R."/>
            <person name="Ehrenreich A."/>
            <person name="Gottschalk G."/>
        </authorList>
    </citation>
    <scope>NUCLEOTIDE SEQUENCE [LARGE SCALE GENOMIC DNA]</scope>
    <source>
        <strain>ATCC 14580 / DSM 13 / JCM 2505 / CCUG 7422 / NBRC 12200 / NCIMB 9375 / NCTC 10341 / NRRL NRS-1264 / Gibson 46</strain>
    </source>
</reference>
<reference key="2">
    <citation type="journal article" date="2004" name="Genome Biol.">
        <title>Complete genome sequence of the industrial bacterium Bacillus licheniformis and comparisons with closely related Bacillus species.</title>
        <authorList>
            <person name="Rey M.W."/>
            <person name="Ramaiya P."/>
            <person name="Nelson B.A."/>
            <person name="Brody-Karpin S.D."/>
            <person name="Zaretsky E.J."/>
            <person name="Tang M."/>
            <person name="Lopez de Leon A."/>
            <person name="Xiang H."/>
            <person name="Gusti V."/>
            <person name="Clausen I.G."/>
            <person name="Olsen P.B."/>
            <person name="Rasmussen M.D."/>
            <person name="Andersen J.T."/>
            <person name="Joergensen P.L."/>
            <person name="Larsen T.S."/>
            <person name="Sorokin A."/>
            <person name="Bolotin A."/>
            <person name="Lapidus A."/>
            <person name="Galleron N."/>
            <person name="Ehrlich S.D."/>
            <person name="Berka R.M."/>
        </authorList>
    </citation>
    <scope>NUCLEOTIDE SEQUENCE [LARGE SCALE GENOMIC DNA]</scope>
    <source>
        <strain>ATCC 14580 / DSM 13 / JCM 2505 / CCUG 7422 / NBRC 12200 / NCIMB 9375 / NCTC 10341 / NRRL NRS-1264 / Gibson 46</strain>
    </source>
</reference>
<evidence type="ECO:0000255" key="1">
    <source>
        <dbReference type="HAMAP-Rule" id="MF_00484"/>
    </source>
</evidence>
<name>GLGA_BACLD</name>
<proteinExistence type="inferred from homology"/>
<sequence length="484" mass="55734">MKVLFAVSECVPFVKSGGLADVAGALPKELALLGIETVVMMPKYSLIAEDVRRRMVKTAECEVRVGWRRQFCGIEHLEHDGVSYYFLDHGYYFNRDSLYGHYDDGERFAFFSRAVLEALYALNFEADVIHTHDWHTGMVNYLLKEEYRKKPFYQHMKSVFTIHNLQFQGIFPKEAVHDLLGLDISHFTTEKLEFYGNINYMKGGIIAADQVTTVSPTYRDEILTPYYGERLEGVLSDKKDALTGILNGIDDVLYDPLNDPHIDYHYDAVNRDGKRKNKAVIQKTFGLPVNEDIPLISMVARLTKQKGFDLIKRVLHELFEEEDMQLIVLGTGEAEFENYFRYMEHAFPDRCKAYIGFHEPLSRKIYAASDLFLMPSKFEPCGLGQLIALRYGAVPVVRETGGLHDTVTAYRETTGEGNGFTFAHFNAHDMKHTIKRALSFYHRKEEWGRIVQKAMTHDVSWALSARQYQRLYSREIKGEAHVLK</sequence>